<dbReference type="EMBL" id="CR861187">
    <property type="protein sequence ID" value="CAH93258.1"/>
    <property type="molecule type" value="mRNA"/>
</dbReference>
<dbReference type="RefSeq" id="NP_001126916.1">
    <property type="nucleotide sequence ID" value="NM_001133444.1"/>
</dbReference>
<dbReference type="STRING" id="9601.ENSPPYP00000021627"/>
<dbReference type="GeneID" id="100173933"/>
<dbReference type="KEGG" id="pon:100173933"/>
<dbReference type="CTD" id="158471"/>
<dbReference type="eggNOG" id="KOG3308">
    <property type="taxonomic scope" value="Eukaryota"/>
</dbReference>
<dbReference type="InParanoid" id="Q5R4Q8"/>
<dbReference type="OrthoDB" id="19923at2759"/>
<dbReference type="Proteomes" id="UP000001595">
    <property type="component" value="Unplaced"/>
</dbReference>
<dbReference type="GO" id="GO:0005737">
    <property type="term" value="C:cytoplasm"/>
    <property type="evidence" value="ECO:0007669"/>
    <property type="project" value="UniProtKB-SubCell"/>
</dbReference>
<dbReference type="GO" id="GO:0006915">
    <property type="term" value="P:apoptotic process"/>
    <property type="evidence" value="ECO:0007669"/>
    <property type="project" value="UniProtKB-KW"/>
</dbReference>
<dbReference type="CDD" id="cd00170">
    <property type="entry name" value="SEC14"/>
    <property type="match status" value="1"/>
</dbReference>
<dbReference type="FunFam" id="3.40.525.10:FF:000001">
    <property type="entry name" value="BCL2/adenovirus E1B protein-interacting protein 2"/>
    <property type="match status" value="1"/>
</dbReference>
<dbReference type="Gene3D" id="3.40.525.10">
    <property type="entry name" value="CRAL-TRIO lipid binding domain"/>
    <property type="match status" value="1"/>
</dbReference>
<dbReference type="InterPro" id="IPR022181">
    <property type="entry name" value="Bcl2-/adenovirus-E1B"/>
</dbReference>
<dbReference type="InterPro" id="IPR001251">
    <property type="entry name" value="CRAL-TRIO_dom"/>
</dbReference>
<dbReference type="InterPro" id="IPR036865">
    <property type="entry name" value="CRAL-TRIO_dom_sf"/>
</dbReference>
<dbReference type="PANTHER" id="PTHR12112">
    <property type="entry name" value="BNIP - RELATED"/>
    <property type="match status" value="1"/>
</dbReference>
<dbReference type="PANTHER" id="PTHR12112:SF11">
    <property type="entry name" value="PROTEIN PRUNE HOMOLOG 2"/>
    <property type="match status" value="1"/>
</dbReference>
<dbReference type="Pfam" id="PF12496">
    <property type="entry name" value="BNIP2"/>
    <property type="match status" value="1"/>
</dbReference>
<dbReference type="Pfam" id="PF13716">
    <property type="entry name" value="CRAL_TRIO_2"/>
    <property type="match status" value="1"/>
</dbReference>
<dbReference type="SMART" id="SM00516">
    <property type="entry name" value="SEC14"/>
    <property type="match status" value="1"/>
</dbReference>
<dbReference type="SUPFAM" id="SSF52087">
    <property type="entry name" value="CRAL/TRIO domain"/>
    <property type="match status" value="1"/>
</dbReference>
<dbReference type="PROSITE" id="PS50191">
    <property type="entry name" value="CRAL_TRIO"/>
    <property type="match status" value="1"/>
</dbReference>
<evidence type="ECO:0000250" key="1"/>
<evidence type="ECO:0000255" key="2">
    <source>
        <dbReference type="PROSITE-ProRule" id="PRU00056"/>
    </source>
</evidence>
<evidence type="ECO:0000256" key="3">
    <source>
        <dbReference type="SAM" id="MobiDB-lite"/>
    </source>
</evidence>
<reference key="1">
    <citation type="submission" date="2004-11" db="EMBL/GenBank/DDBJ databases">
        <authorList>
            <consortium name="The German cDNA consortium"/>
        </authorList>
    </citation>
    <scope>NUCLEOTIDE SEQUENCE [LARGE SCALE MRNA]</scope>
    <source>
        <tissue>Brain cortex</tissue>
    </source>
</reference>
<accession>Q5R4Q8</accession>
<comment type="function">
    <text evidence="1">May play an important role in regulating differentiation, survival and aggressiveness of the tumor cells.</text>
</comment>
<comment type="subcellular location">
    <subcellularLocation>
        <location evidence="1">Cytoplasm</location>
    </subcellularLocation>
</comment>
<feature type="chain" id="PRO_0000274882" description="Protein prune homolog 2">
    <location>
        <begin position="1"/>
        <end position="323"/>
    </location>
</feature>
<feature type="domain" description="CRAL-TRIO" evidence="2">
    <location>
        <begin position="130"/>
        <end position="291"/>
    </location>
</feature>
<feature type="region of interest" description="Disordered" evidence="3">
    <location>
        <begin position="1"/>
        <end position="67"/>
    </location>
</feature>
<feature type="region of interest" description="Disordered" evidence="3">
    <location>
        <begin position="79"/>
        <end position="110"/>
    </location>
</feature>
<feature type="compositionally biased region" description="Polar residues" evidence="3">
    <location>
        <begin position="40"/>
        <end position="52"/>
    </location>
</feature>
<feature type="compositionally biased region" description="Acidic residues" evidence="3">
    <location>
        <begin position="57"/>
        <end position="67"/>
    </location>
</feature>
<gene>
    <name type="primary">PRUNE2</name>
    <name type="synonym">BMCC1</name>
</gene>
<proteinExistence type="evidence at transcript level"/>
<protein>
    <recommendedName>
        <fullName>Protein prune homolog 2</fullName>
    </recommendedName>
    <alternativeName>
        <fullName>BNIP2 motif-containing molecule at the C-terminal region 1</fullName>
    </alternativeName>
</protein>
<sequence>MDIPFEEGVLSPSAADMRPEPPNSLDLNDTHPRRIKLTAPNINLSLDQSEGSILSDDNLDSPDEIDINVDELDTPDEADSFEYAGHEDPTANKDSGQESESIPEYTAEEEREDNRLWRTVVIGEQEQRIDMKVIEPYRRVISHGGYYGDGLNAIIVFAACFLPDSSRADYHYVMENLFLYVISTLELMVAEDYMIVYLNGATPRRRMPGLGWMKKCYQMIDRRLRKNLKSFIIVHPSWFIRTILAATRPFISSKFSSKIKYVNSLSELSGLIPMDCIHIPESIIKLDEELREASEAAKTSCLYNDPEMSSMEKDIDLKLKEKP</sequence>
<organism>
    <name type="scientific">Pongo abelii</name>
    <name type="common">Sumatran orangutan</name>
    <name type="synonym">Pongo pygmaeus abelii</name>
    <dbReference type="NCBI Taxonomy" id="9601"/>
    <lineage>
        <taxon>Eukaryota</taxon>
        <taxon>Metazoa</taxon>
        <taxon>Chordata</taxon>
        <taxon>Craniata</taxon>
        <taxon>Vertebrata</taxon>
        <taxon>Euteleostomi</taxon>
        <taxon>Mammalia</taxon>
        <taxon>Eutheria</taxon>
        <taxon>Euarchontoglires</taxon>
        <taxon>Primates</taxon>
        <taxon>Haplorrhini</taxon>
        <taxon>Catarrhini</taxon>
        <taxon>Hominidae</taxon>
        <taxon>Pongo</taxon>
    </lineage>
</organism>
<name>PRUN2_PONAB</name>
<keyword id="KW-0053">Apoptosis</keyword>
<keyword id="KW-0963">Cytoplasm</keyword>
<keyword id="KW-1185">Reference proteome</keyword>